<comment type="function">
    <text evidence="1">IGPS catalyzes the conversion of PRFAR and glutamine to IGP, AICAR and glutamate. The HisF subunit catalyzes the cyclization activity that produces IGP and AICAR from PRFAR using the ammonia provided by the HisH subunit.</text>
</comment>
<comment type="catalytic activity">
    <reaction evidence="1">
        <text>5-[(5-phospho-1-deoxy-D-ribulos-1-ylimino)methylamino]-1-(5-phospho-beta-D-ribosyl)imidazole-4-carboxamide + L-glutamine = D-erythro-1-(imidazol-4-yl)glycerol 3-phosphate + 5-amino-1-(5-phospho-beta-D-ribosyl)imidazole-4-carboxamide + L-glutamate + H(+)</text>
        <dbReference type="Rhea" id="RHEA:24793"/>
        <dbReference type="ChEBI" id="CHEBI:15378"/>
        <dbReference type="ChEBI" id="CHEBI:29985"/>
        <dbReference type="ChEBI" id="CHEBI:58278"/>
        <dbReference type="ChEBI" id="CHEBI:58359"/>
        <dbReference type="ChEBI" id="CHEBI:58475"/>
        <dbReference type="ChEBI" id="CHEBI:58525"/>
        <dbReference type="EC" id="4.3.2.10"/>
    </reaction>
</comment>
<comment type="pathway">
    <text evidence="1">Amino-acid biosynthesis; L-histidine biosynthesis; L-histidine from 5-phospho-alpha-D-ribose 1-diphosphate: step 5/9.</text>
</comment>
<comment type="subunit">
    <text evidence="1">Heterodimer of HisH and HisF.</text>
</comment>
<comment type="subcellular location">
    <subcellularLocation>
        <location evidence="1">Cytoplasm</location>
    </subcellularLocation>
</comment>
<comment type="similarity">
    <text evidence="1">Belongs to the HisA/HisF family.</text>
</comment>
<proteinExistence type="inferred from homology"/>
<sequence>MTLKARVIPCLDVKDGRVVKGVNFVDLIDAGDPVEAARAYDAAGADELCFLDITASSDNRETIFDVVARTAEQCFMPLTVGGGVRQVADIRKLLLAGADKVSINTAAVKNPEFVAEAADKFGNQCIVVAIDAKKVSGAGENDRWEIFTHGGRQPTGIDAVEFAQKVVDLGAGEILLTSMDRDGTKAGYDVALTRAVADSVRAPVIASGGVGTLDHLVAGIRDGHATAVLAASIFHFGTYTIGEAKRYMAEAGIPMRLDPVR</sequence>
<evidence type="ECO:0000255" key="1">
    <source>
        <dbReference type="HAMAP-Rule" id="MF_01013"/>
    </source>
</evidence>
<reference key="1">
    <citation type="journal article" date="2005" name="J. Bacteriol.">
        <title>Completion of the genome sequence of Brucella abortus and comparison to the highly similar genomes of Brucella melitensis and Brucella suis.</title>
        <authorList>
            <person name="Halling S.M."/>
            <person name="Peterson-Burch B.D."/>
            <person name="Bricker B.J."/>
            <person name="Zuerner R.L."/>
            <person name="Qing Z."/>
            <person name="Li L.-L."/>
            <person name="Kapur V."/>
            <person name="Alt D.P."/>
            <person name="Olsen S.C."/>
        </authorList>
    </citation>
    <scope>NUCLEOTIDE SEQUENCE [LARGE SCALE GENOMIC DNA]</scope>
    <source>
        <strain>9-941</strain>
    </source>
</reference>
<protein>
    <recommendedName>
        <fullName evidence="1">Imidazole glycerol phosphate synthase subunit HisF</fullName>
        <ecNumber evidence="1">4.3.2.10</ecNumber>
    </recommendedName>
    <alternativeName>
        <fullName evidence="1">IGP synthase cyclase subunit</fullName>
    </alternativeName>
    <alternativeName>
        <fullName evidence="1">IGP synthase subunit HisF</fullName>
    </alternativeName>
    <alternativeName>
        <fullName evidence="1">ImGP synthase subunit HisF</fullName>
        <shortName evidence="1">IGPS subunit HisF</shortName>
    </alternativeName>
</protein>
<feature type="chain" id="PRO_0000230121" description="Imidazole glycerol phosphate synthase subunit HisF">
    <location>
        <begin position="1"/>
        <end position="261"/>
    </location>
</feature>
<feature type="active site" evidence="1">
    <location>
        <position position="12"/>
    </location>
</feature>
<feature type="active site" evidence="1">
    <location>
        <position position="131"/>
    </location>
</feature>
<keyword id="KW-0028">Amino-acid biosynthesis</keyword>
<keyword id="KW-0963">Cytoplasm</keyword>
<keyword id="KW-0368">Histidine biosynthesis</keyword>
<keyword id="KW-0456">Lyase</keyword>
<organism>
    <name type="scientific">Brucella abortus biovar 1 (strain 9-941)</name>
    <dbReference type="NCBI Taxonomy" id="262698"/>
    <lineage>
        <taxon>Bacteria</taxon>
        <taxon>Pseudomonadati</taxon>
        <taxon>Pseudomonadota</taxon>
        <taxon>Alphaproteobacteria</taxon>
        <taxon>Hyphomicrobiales</taxon>
        <taxon>Brucellaceae</taxon>
        <taxon>Brucella/Ochrobactrum group</taxon>
        <taxon>Brucella</taxon>
    </lineage>
</organism>
<gene>
    <name evidence="1" type="primary">hisF</name>
    <name type="ordered locus">BruAb1_2060</name>
</gene>
<accession>Q57AH3</accession>
<name>HIS6_BRUAB</name>
<dbReference type="EC" id="4.3.2.10" evidence="1"/>
<dbReference type="EMBL" id="AE017223">
    <property type="protein sequence ID" value="AAX75361.1"/>
    <property type="molecule type" value="Genomic_DNA"/>
</dbReference>
<dbReference type="RefSeq" id="WP_002965151.1">
    <property type="nucleotide sequence ID" value="NC_006932.1"/>
</dbReference>
<dbReference type="SMR" id="Q57AH3"/>
<dbReference type="EnsemblBacteria" id="AAX75361">
    <property type="protein sequence ID" value="AAX75361"/>
    <property type="gene ID" value="BruAb1_2060"/>
</dbReference>
<dbReference type="GeneID" id="97534652"/>
<dbReference type="KEGG" id="bmb:BruAb1_2060"/>
<dbReference type="HOGENOM" id="CLU_048577_4_0_5"/>
<dbReference type="UniPathway" id="UPA00031">
    <property type="reaction ID" value="UER00010"/>
</dbReference>
<dbReference type="PRO" id="PR:Q57AH3"/>
<dbReference type="Proteomes" id="UP000000540">
    <property type="component" value="Chromosome I"/>
</dbReference>
<dbReference type="GO" id="GO:0005737">
    <property type="term" value="C:cytoplasm"/>
    <property type="evidence" value="ECO:0007669"/>
    <property type="project" value="UniProtKB-SubCell"/>
</dbReference>
<dbReference type="GO" id="GO:0000107">
    <property type="term" value="F:imidazoleglycerol-phosphate synthase activity"/>
    <property type="evidence" value="ECO:0007669"/>
    <property type="project" value="UniProtKB-UniRule"/>
</dbReference>
<dbReference type="GO" id="GO:0016829">
    <property type="term" value="F:lyase activity"/>
    <property type="evidence" value="ECO:0007669"/>
    <property type="project" value="UniProtKB-KW"/>
</dbReference>
<dbReference type="GO" id="GO:0000105">
    <property type="term" value="P:L-histidine biosynthetic process"/>
    <property type="evidence" value="ECO:0007669"/>
    <property type="project" value="UniProtKB-UniRule"/>
</dbReference>
<dbReference type="CDD" id="cd04731">
    <property type="entry name" value="HisF"/>
    <property type="match status" value="1"/>
</dbReference>
<dbReference type="FunFam" id="3.20.20.70:FF:000006">
    <property type="entry name" value="Imidazole glycerol phosphate synthase subunit HisF"/>
    <property type="match status" value="1"/>
</dbReference>
<dbReference type="Gene3D" id="3.20.20.70">
    <property type="entry name" value="Aldolase class I"/>
    <property type="match status" value="1"/>
</dbReference>
<dbReference type="HAMAP" id="MF_01013">
    <property type="entry name" value="HisF"/>
    <property type="match status" value="1"/>
</dbReference>
<dbReference type="InterPro" id="IPR013785">
    <property type="entry name" value="Aldolase_TIM"/>
</dbReference>
<dbReference type="InterPro" id="IPR006062">
    <property type="entry name" value="His_biosynth"/>
</dbReference>
<dbReference type="InterPro" id="IPR004651">
    <property type="entry name" value="HisF"/>
</dbReference>
<dbReference type="InterPro" id="IPR050064">
    <property type="entry name" value="IGPS_HisA/HisF"/>
</dbReference>
<dbReference type="InterPro" id="IPR011060">
    <property type="entry name" value="RibuloseP-bd_barrel"/>
</dbReference>
<dbReference type="NCBIfam" id="TIGR00735">
    <property type="entry name" value="hisF"/>
    <property type="match status" value="1"/>
</dbReference>
<dbReference type="PANTHER" id="PTHR21235:SF2">
    <property type="entry name" value="IMIDAZOLE GLYCEROL PHOSPHATE SYNTHASE HISHF"/>
    <property type="match status" value="1"/>
</dbReference>
<dbReference type="PANTHER" id="PTHR21235">
    <property type="entry name" value="IMIDAZOLE GLYCEROL PHOSPHATE SYNTHASE SUBUNIT HISF/H IGP SYNTHASE SUBUNIT HISF/H"/>
    <property type="match status" value="1"/>
</dbReference>
<dbReference type="Pfam" id="PF00977">
    <property type="entry name" value="His_biosynth"/>
    <property type="match status" value="1"/>
</dbReference>
<dbReference type="SUPFAM" id="SSF51366">
    <property type="entry name" value="Ribulose-phoshate binding barrel"/>
    <property type="match status" value="1"/>
</dbReference>